<dbReference type="EMBL" id="AF296081">
    <property type="protein sequence ID" value="AAG53645.1"/>
    <property type="molecule type" value="mRNA"/>
</dbReference>
<dbReference type="SMR" id="Q9AXQ7"/>
<dbReference type="GO" id="GO:0043022">
    <property type="term" value="F:ribosome binding"/>
    <property type="evidence" value="ECO:0007669"/>
    <property type="project" value="InterPro"/>
</dbReference>
<dbReference type="GO" id="GO:0003723">
    <property type="term" value="F:RNA binding"/>
    <property type="evidence" value="ECO:0007669"/>
    <property type="project" value="InterPro"/>
</dbReference>
<dbReference type="GO" id="GO:0003746">
    <property type="term" value="F:translation elongation factor activity"/>
    <property type="evidence" value="ECO:0007669"/>
    <property type="project" value="InterPro"/>
</dbReference>
<dbReference type="GO" id="GO:0003743">
    <property type="term" value="F:translation initiation factor activity"/>
    <property type="evidence" value="ECO:0007669"/>
    <property type="project" value="UniProtKB-KW"/>
</dbReference>
<dbReference type="GO" id="GO:0045901">
    <property type="term" value="P:positive regulation of translational elongation"/>
    <property type="evidence" value="ECO:0007669"/>
    <property type="project" value="InterPro"/>
</dbReference>
<dbReference type="GO" id="GO:0045905">
    <property type="term" value="P:positive regulation of translational termination"/>
    <property type="evidence" value="ECO:0007669"/>
    <property type="project" value="InterPro"/>
</dbReference>
<dbReference type="CDD" id="cd04468">
    <property type="entry name" value="S1_eIF5A"/>
    <property type="match status" value="1"/>
</dbReference>
<dbReference type="FunFam" id="2.30.30.30:FF:000012">
    <property type="entry name" value="Eukaryotic translation initiation factor 5A"/>
    <property type="match status" value="1"/>
</dbReference>
<dbReference type="FunFam" id="2.40.50.140:FF:000034">
    <property type="entry name" value="Eukaryotic translation initiation factor 5A"/>
    <property type="match status" value="1"/>
</dbReference>
<dbReference type="Gene3D" id="2.30.30.30">
    <property type="match status" value="1"/>
</dbReference>
<dbReference type="Gene3D" id="2.40.50.140">
    <property type="entry name" value="Nucleic acid-binding proteins"/>
    <property type="match status" value="1"/>
</dbReference>
<dbReference type="InterPro" id="IPR001884">
    <property type="entry name" value="IF5A-like"/>
</dbReference>
<dbReference type="InterPro" id="IPR048670">
    <property type="entry name" value="IF5A-like_N"/>
</dbReference>
<dbReference type="InterPro" id="IPR012340">
    <property type="entry name" value="NA-bd_OB-fold"/>
</dbReference>
<dbReference type="InterPro" id="IPR014722">
    <property type="entry name" value="Rib_uL2_dom2"/>
</dbReference>
<dbReference type="InterPro" id="IPR019769">
    <property type="entry name" value="Trans_elong_IF5A_hypusine_site"/>
</dbReference>
<dbReference type="InterPro" id="IPR020189">
    <property type="entry name" value="Transl_elong_IF5A_C"/>
</dbReference>
<dbReference type="InterPro" id="IPR008991">
    <property type="entry name" value="Translation_prot_SH3-like_sf"/>
</dbReference>
<dbReference type="NCBIfam" id="TIGR00037">
    <property type="entry name" value="eIF_5A"/>
    <property type="match status" value="1"/>
</dbReference>
<dbReference type="PANTHER" id="PTHR11673">
    <property type="entry name" value="TRANSLATION INITIATION FACTOR 5A FAMILY MEMBER"/>
    <property type="match status" value="1"/>
</dbReference>
<dbReference type="Pfam" id="PF01287">
    <property type="entry name" value="eIF-5a"/>
    <property type="match status" value="1"/>
</dbReference>
<dbReference type="Pfam" id="PF21485">
    <property type="entry name" value="IF5A-like_N"/>
    <property type="match status" value="1"/>
</dbReference>
<dbReference type="PIRSF" id="PIRSF003025">
    <property type="entry name" value="eIF5A"/>
    <property type="match status" value="1"/>
</dbReference>
<dbReference type="SMART" id="SM01376">
    <property type="entry name" value="eIF-5a"/>
    <property type="match status" value="1"/>
</dbReference>
<dbReference type="SUPFAM" id="SSF50249">
    <property type="entry name" value="Nucleic acid-binding proteins"/>
    <property type="match status" value="1"/>
</dbReference>
<dbReference type="SUPFAM" id="SSF50104">
    <property type="entry name" value="Translation proteins SH3-like domain"/>
    <property type="match status" value="1"/>
</dbReference>
<dbReference type="PROSITE" id="PS00302">
    <property type="entry name" value="IF5A_HYPUSINE"/>
    <property type="match status" value="1"/>
</dbReference>
<comment type="function">
    <text evidence="1">Translation factor that promotes translation elongation and termination, particularly upon ribosome stalling at specific amino acid sequence contexts (By similarity). Binds between the exit (E) and peptidyl (P) site of the ribosome and promotes rescue of stalled ribosome: specifically required for efficient translation of polyproline-containing peptides as well as other motifs that stall the ribosome (By similarity). Acts as a ribosome quality control (RQC) cofactor by joining the RQC complex to facilitate peptidyl transfer during CAT tailing step (By similarity).</text>
</comment>
<comment type="PTM">
    <text evidence="2">Lys-52 undergoes hypusination, a unique post-translational modification that consists in the addition of a butylamino group from spermidine to lysine side chain, leading to the formation of the unusual amino acid hypusine. eIF-5As are the only known proteins to undergo this modification, which is essential for their function.</text>
</comment>
<comment type="similarity">
    <text evidence="4">Belongs to the eIF-5A family.</text>
</comment>
<name>IF5A_DIACA</name>
<protein>
    <recommendedName>
        <fullName>Eukaryotic translation initiation factor 5A</fullName>
        <shortName>eIF-5A</shortName>
    </recommendedName>
</protein>
<keyword id="KW-0385">Hypusine</keyword>
<keyword id="KW-0396">Initiation factor</keyword>
<keyword id="KW-0648">Protein biosynthesis</keyword>
<sequence>MSDDDHHFESSADAGASKTYPQQAGTIRKSGHIVIKNRPCKVVEVSTSKTGKHGHAKCHFVAIDIFNGKKLEDIVPSSHNCDVPHVNRVDYQLLDITEDGFVSLLTDSGDTKDDLKLPADEALVKQMKEGFEAGKDLILSVMCAMGEEQICAVKDVSGGK</sequence>
<evidence type="ECO:0000250" key="1">
    <source>
        <dbReference type="UniProtKB" id="P23301"/>
    </source>
</evidence>
<evidence type="ECO:0000250" key="2">
    <source>
        <dbReference type="UniProtKB" id="Q9XI91"/>
    </source>
</evidence>
<evidence type="ECO:0000256" key="3">
    <source>
        <dbReference type="SAM" id="MobiDB-lite"/>
    </source>
</evidence>
<evidence type="ECO:0000305" key="4"/>
<proteinExistence type="evidence at transcript level"/>
<feature type="chain" id="PRO_0000142466" description="Eukaryotic translation initiation factor 5A">
    <location>
        <begin position="1"/>
        <end position="160"/>
    </location>
</feature>
<feature type="region of interest" description="Disordered" evidence="3">
    <location>
        <begin position="1"/>
        <end position="23"/>
    </location>
</feature>
<feature type="compositionally biased region" description="Basic and acidic residues" evidence="3">
    <location>
        <begin position="1"/>
        <end position="10"/>
    </location>
</feature>
<feature type="modified residue" description="Hypusine" evidence="2">
    <location>
        <position position="52"/>
    </location>
</feature>
<organism>
    <name type="scientific">Dianthus caryophyllus</name>
    <name type="common">Carnation</name>
    <name type="synonym">Clove pink</name>
    <dbReference type="NCBI Taxonomy" id="3570"/>
    <lineage>
        <taxon>Eukaryota</taxon>
        <taxon>Viridiplantae</taxon>
        <taxon>Streptophyta</taxon>
        <taxon>Embryophyta</taxon>
        <taxon>Tracheophyta</taxon>
        <taxon>Spermatophyta</taxon>
        <taxon>Magnoliopsida</taxon>
        <taxon>eudicotyledons</taxon>
        <taxon>Gunneridae</taxon>
        <taxon>Pentapetalae</taxon>
        <taxon>Caryophyllales</taxon>
        <taxon>Caryophyllaceae</taxon>
        <taxon>Caryophylleae</taxon>
        <taxon>Dianthus</taxon>
    </lineage>
</organism>
<reference key="1">
    <citation type="journal article" date="2001" name="J. Biol. Chem.">
        <title>Isolation and characterization of senescence-induced cDNAs encoding deoxyhypusine synthase and eucaryotic translation initiation factor 5A from tomato.</title>
        <authorList>
            <person name="Wang T.-W."/>
            <person name="Lu L."/>
            <person name="Wang D."/>
            <person name="Thompson J.E."/>
        </authorList>
    </citation>
    <scope>NUCLEOTIDE SEQUENCE [MRNA]</scope>
</reference>
<accession>Q9AXQ7</accession>